<name>RN145_DANRE</name>
<accession>Q7ZWF4</accession>
<proteinExistence type="evidence at transcript level"/>
<protein>
    <recommendedName>
        <fullName>RING finger protein 145</fullName>
    </recommendedName>
</protein>
<evidence type="ECO:0000255" key="1"/>
<evidence type="ECO:0000255" key="2">
    <source>
        <dbReference type="PROSITE-ProRule" id="PRU00175"/>
    </source>
</evidence>
<evidence type="ECO:0000256" key="3">
    <source>
        <dbReference type="SAM" id="MobiDB-lite"/>
    </source>
</evidence>
<evidence type="ECO:0000305" key="4"/>
<dbReference type="EMBL" id="BC049437">
    <property type="protein sequence ID" value="AAH49437.1"/>
    <property type="molecule type" value="mRNA"/>
</dbReference>
<dbReference type="RefSeq" id="NP_956057.1">
    <property type="nucleotide sequence ID" value="NM_199763.1"/>
</dbReference>
<dbReference type="FunCoup" id="Q7ZWF4">
    <property type="interactions" value="402"/>
</dbReference>
<dbReference type="STRING" id="7955.ENSDARP00000047514"/>
<dbReference type="PaxDb" id="7955-ENSDARP00000047514"/>
<dbReference type="GeneID" id="327056"/>
<dbReference type="KEGG" id="dre:327056"/>
<dbReference type="AGR" id="ZFIN:ZDB-GENE-030131-5264"/>
<dbReference type="CTD" id="327056"/>
<dbReference type="ZFIN" id="ZDB-GENE-030131-5264">
    <property type="gene designation" value="rnf145b"/>
</dbReference>
<dbReference type="eggNOG" id="KOG0802">
    <property type="taxonomic scope" value="Eukaryota"/>
</dbReference>
<dbReference type="InParanoid" id="Q7ZWF4"/>
<dbReference type="OrthoDB" id="4752984at2759"/>
<dbReference type="PhylomeDB" id="Q7ZWF4"/>
<dbReference type="PRO" id="PR:Q7ZWF4"/>
<dbReference type="Proteomes" id="UP000000437">
    <property type="component" value="Chromosome 21"/>
</dbReference>
<dbReference type="GO" id="GO:0012505">
    <property type="term" value="C:endomembrane system"/>
    <property type="evidence" value="ECO:0000318"/>
    <property type="project" value="GO_Central"/>
</dbReference>
<dbReference type="GO" id="GO:0016020">
    <property type="term" value="C:membrane"/>
    <property type="evidence" value="ECO:0007669"/>
    <property type="project" value="UniProtKB-SubCell"/>
</dbReference>
<dbReference type="GO" id="GO:0061630">
    <property type="term" value="F:ubiquitin protein ligase activity"/>
    <property type="evidence" value="ECO:0000318"/>
    <property type="project" value="GO_Central"/>
</dbReference>
<dbReference type="GO" id="GO:0008270">
    <property type="term" value="F:zinc ion binding"/>
    <property type="evidence" value="ECO:0007669"/>
    <property type="project" value="UniProtKB-KW"/>
</dbReference>
<dbReference type="GO" id="GO:0036503">
    <property type="term" value="P:ERAD pathway"/>
    <property type="evidence" value="ECO:0000318"/>
    <property type="project" value="GO_Central"/>
</dbReference>
<dbReference type="GO" id="GO:0030097">
    <property type="term" value="P:hemopoiesis"/>
    <property type="evidence" value="ECO:0000315"/>
    <property type="project" value="ZFIN"/>
</dbReference>
<dbReference type="GO" id="GO:0061515">
    <property type="term" value="P:myeloid cell development"/>
    <property type="evidence" value="ECO:0000315"/>
    <property type="project" value="ZFIN"/>
</dbReference>
<dbReference type="GO" id="GO:0043161">
    <property type="term" value="P:proteasome-mediated ubiquitin-dependent protein catabolic process"/>
    <property type="evidence" value="ECO:0000318"/>
    <property type="project" value="GO_Central"/>
</dbReference>
<dbReference type="CDD" id="cd16684">
    <property type="entry name" value="RING-H2_RNF145"/>
    <property type="match status" value="1"/>
</dbReference>
<dbReference type="FunFam" id="3.30.40.10:FF:000145">
    <property type="entry name" value="RING finger protein 145"/>
    <property type="match status" value="1"/>
</dbReference>
<dbReference type="Gene3D" id="3.30.40.10">
    <property type="entry name" value="Zinc/RING finger domain, C3HC4 (zinc finger)"/>
    <property type="match status" value="1"/>
</dbReference>
<dbReference type="InterPro" id="IPR050731">
    <property type="entry name" value="HRD1_E3_ubiq-ligases"/>
</dbReference>
<dbReference type="InterPro" id="IPR047823">
    <property type="entry name" value="RNF145_RING-H2"/>
</dbReference>
<dbReference type="InterPro" id="IPR025754">
    <property type="entry name" value="TRC8_N_dom"/>
</dbReference>
<dbReference type="InterPro" id="IPR001841">
    <property type="entry name" value="Znf_RING"/>
</dbReference>
<dbReference type="InterPro" id="IPR011016">
    <property type="entry name" value="Znf_RING-CH"/>
</dbReference>
<dbReference type="InterPro" id="IPR013083">
    <property type="entry name" value="Znf_RING/FYVE/PHD"/>
</dbReference>
<dbReference type="PANTHER" id="PTHR22763:SF167">
    <property type="entry name" value="RING FINGER PROTEIN 145"/>
    <property type="match status" value="1"/>
</dbReference>
<dbReference type="PANTHER" id="PTHR22763">
    <property type="entry name" value="RING ZINC FINGER PROTEIN"/>
    <property type="match status" value="1"/>
</dbReference>
<dbReference type="Pfam" id="PF13705">
    <property type="entry name" value="TRC8_N"/>
    <property type="match status" value="1"/>
</dbReference>
<dbReference type="Pfam" id="PF13639">
    <property type="entry name" value="zf-RING_2"/>
    <property type="match status" value="1"/>
</dbReference>
<dbReference type="SMART" id="SM00184">
    <property type="entry name" value="RING"/>
    <property type="match status" value="1"/>
</dbReference>
<dbReference type="SMART" id="SM00744">
    <property type="entry name" value="RINGv"/>
    <property type="match status" value="1"/>
</dbReference>
<dbReference type="SUPFAM" id="SSF57850">
    <property type="entry name" value="RING/U-box"/>
    <property type="match status" value="1"/>
</dbReference>
<dbReference type="PROSITE" id="PS50089">
    <property type="entry name" value="ZF_RING_2"/>
    <property type="match status" value="1"/>
</dbReference>
<gene>
    <name type="primary">rnf145</name>
    <name type="ORF">zgc:56435</name>
</gene>
<organism>
    <name type="scientific">Danio rerio</name>
    <name type="common">Zebrafish</name>
    <name type="synonym">Brachydanio rerio</name>
    <dbReference type="NCBI Taxonomy" id="7955"/>
    <lineage>
        <taxon>Eukaryota</taxon>
        <taxon>Metazoa</taxon>
        <taxon>Chordata</taxon>
        <taxon>Craniata</taxon>
        <taxon>Vertebrata</taxon>
        <taxon>Euteleostomi</taxon>
        <taxon>Actinopterygii</taxon>
        <taxon>Neopterygii</taxon>
        <taxon>Teleostei</taxon>
        <taxon>Ostariophysi</taxon>
        <taxon>Cypriniformes</taxon>
        <taxon>Danionidae</taxon>
        <taxon>Danioninae</taxon>
        <taxon>Danio</taxon>
    </lineage>
</organism>
<reference key="1">
    <citation type="submission" date="2003-03" db="EMBL/GenBank/DDBJ databases">
        <authorList>
            <consortium name="NIH - Zebrafish Gene Collection (ZGC) project"/>
        </authorList>
    </citation>
    <scope>NUCLEOTIDE SEQUENCE [LARGE SCALE MRNA]</scope>
    <source>
        <strain>SJD</strain>
    </source>
</reference>
<keyword id="KW-0472">Membrane</keyword>
<keyword id="KW-0479">Metal-binding</keyword>
<keyword id="KW-1185">Reference proteome</keyword>
<keyword id="KW-0812">Transmembrane</keyword>
<keyword id="KW-1133">Transmembrane helix</keyword>
<keyword id="KW-0862">Zinc</keyword>
<keyword id="KW-0863">Zinc-finger</keyword>
<comment type="subcellular location">
    <subcellularLocation>
        <location evidence="4">Membrane</location>
        <topology evidence="4">Multi-pass membrane protein</topology>
    </subcellularLocation>
</comment>
<sequence>MAMKARLESVLNVGLRIPSIMLLEVLYRWDVSSFFQKIQRSSLNNNPVFQYKYIALYLHYVGYILSLVLLTLPRQHLVQLYLYVLTALLLFAGHQLSRDYVRGELDSGYEGPLYLEPLSMNRFTTALIGQVVVCTLCSCVMQTRQIWLFSAHLLPLVARLCLVPLETIVFINRFAMIFTGLEVLYFIASNLLVPYNLAKTAYRELVQVVEVYGLLALGMSLWNQLVLPVLFMCFWLVLFALQIYTYFSTRDQPPSRERLLFLFLTSIAECCSTPYSLLGLVFTVSFVALGVLTLCKFYLQGYRAFMNDNAMHRGMTEGITLLILAVQTGLIELQVIHRAFLLSIILFIVVASILQSMLEIADPIVLALGASRDKSLWKHFRAVSLCLFLLVFPAYMAYMICQFFRMDFWLLIIISSSILTSLQVLGTLLIYVLFMVEEFRKAPVENMDEVIYYVNGTYRLLEFLVAVCVVAYGVSETLFGEWTVMGSTIILVHSYYNVWLRAQLGWQSFLLRRDAVHKIQSMPTASTLQLQQHNDICSICFQDMKSAVITPCSHFFHAACLKKWLYVQETCPLCHGQLKSQLQPTSSPGTPTQGTPAANQNPREVEQEQRQPQVELNTEEGIRAEEMKTSAEQKLGMDLLPGSLNTQPKECDLVAEGSAGTASNLKGDDYYDDDDVSTSDVNCAS</sequence>
<feature type="chain" id="PRO_0000294026" description="RING finger protein 145">
    <location>
        <begin position="1"/>
        <end position="685"/>
    </location>
</feature>
<feature type="transmembrane region" description="Helical" evidence="1">
    <location>
        <begin position="53"/>
        <end position="73"/>
    </location>
</feature>
<feature type="transmembrane region" description="Helical" evidence="1">
    <location>
        <begin position="77"/>
        <end position="97"/>
    </location>
</feature>
<feature type="transmembrane region" description="Helical" evidence="1">
    <location>
        <begin position="123"/>
        <end position="143"/>
    </location>
</feature>
<feature type="transmembrane region" description="Helical" evidence="1">
    <location>
        <begin position="151"/>
        <end position="171"/>
    </location>
</feature>
<feature type="transmembrane region" description="Helical" evidence="1">
    <location>
        <begin position="174"/>
        <end position="194"/>
    </location>
</feature>
<feature type="transmembrane region" description="Helical" evidence="1">
    <location>
        <begin position="225"/>
        <end position="245"/>
    </location>
</feature>
<feature type="transmembrane region" description="Helical" evidence="1">
    <location>
        <begin position="275"/>
        <end position="295"/>
    </location>
</feature>
<feature type="transmembrane region" description="Helical" evidence="1">
    <location>
        <begin position="316"/>
        <end position="336"/>
    </location>
</feature>
<feature type="transmembrane region" description="Helical" evidence="1">
    <location>
        <begin position="340"/>
        <end position="360"/>
    </location>
</feature>
<feature type="transmembrane region" description="Helical" evidence="1">
    <location>
        <begin position="384"/>
        <end position="404"/>
    </location>
</feature>
<feature type="transmembrane region" description="Helical" evidence="1">
    <location>
        <begin position="410"/>
        <end position="430"/>
    </location>
</feature>
<feature type="transmembrane region" description="Helical" evidence="1">
    <location>
        <begin position="460"/>
        <end position="480"/>
    </location>
</feature>
<feature type="transmembrane region" description="Helical" evidence="1">
    <location>
        <begin position="482"/>
        <end position="502"/>
    </location>
</feature>
<feature type="zinc finger region" description="RING-type; atypical" evidence="2">
    <location>
        <begin position="537"/>
        <end position="575"/>
    </location>
</feature>
<feature type="region of interest" description="Disordered" evidence="3">
    <location>
        <begin position="582"/>
        <end position="685"/>
    </location>
</feature>
<feature type="compositionally biased region" description="Low complexity" evidence="3">
    <location>
        <begin position="583"/>
        <end position="602"/>
    </location>
</feature>
<feature type="compositionally biased region" description="Basic and acidic residues" evidence="3">
    <location>
        <begin position="620"/>
        <end position="631"/>
    </location>
</feature>